<proteinExistence type="evidence at transcript level"/>
<sequence length="257" mass="28176">MVLIRVLANLLILQLSYAQKSSELVVGGLPCNINEHRFLVLVYSDGIQCGGTLINKEWMLTAAHCDGKKMKLQFGLHSKNVPNKDKQTRVPKKKYFFPCSKNFTKWDKDIMLIRLNHPVNNSTHIAPLSLPSKPPSQDTVCNIMGWGTISPTKEIYPDVPHCAYINIVDHAVCRAFYPGLLEKSKTLCAGILEGGKDTCQGDSGGPLICNGQIQGIVSVGGDPCAEPRVSVLYTKVFDHLDWIKSIIAGNTAATCPL</sequence>
<protein>
    <recommendedName>
        <fullName>Snake venom serine protease KN8</fullName>
        <shortName>SVSP</shortName>
        <ecNumber>3.4.21.-</ecNumber>
    </recommendedName>
</protein>
<reference key="1">
    <citation type="submission" date="2001-06" db="EMBL/GenBank/DDBJ databases">
        <title>Identification of geographic variations and cloning of venom proteins of Trimeresurus stejnegeri: serine proteases and phospholipases.</title>
        <authorList>
            <person name="Tsai I.-H."/>
            <person name="Wang Y.-M."/>
        </authorList>
    </citation>
    <scope>NUCLEOTIDE SEQUENCE [MRNA]</scope>
    <source>
        <tissue>Venom gland</tissue>
    </source>
</reference>
<feature type="signal peptide" evidence="2">
    <location>
        <begin position="1"/>
        <end position="18"/>
    </location>
</feature>
<feature type="propeptide" id="PRO_0000295833" evidence="1">
    <location>
        <begin position="19"/>
        <end position="24"/>
    </location>
</feature>
<feature type="chain" id="PRO_5000061234" description="Snake venom serine protease KN8">
    <location>
        <begin position="25"/>
        <end position="257"/>
    </location>
</feature>
<feature type="domain" description="Peptidase S1" evidence="3">
    <location>
        <begin position="25"/>
        <end position="248"/>
    </location>
</feature>
<feature type="active site" description="Charge relay system" evidence="1">
    <location>
        <position position="64"/>
    </location>
</feature>
<feature type="active site" description="Charge relay system" evidence="1">
    <location>
        <position position="109"/>
    </location>
</feature>
<feature type="active site" description="Charge relay system" evidence="1">
    <location>
        <position position="203"/>
    </location>
</feature>
<feature type="glycosylation site" description="N-linked (GlcNAc...) asparagine" evidence="2">
    <location>
        <position position="102"/>
    </location>
</feature>
<feature type="glycosylation site" description="N-linked (GlcNAc...) asparagine" evidence="2">
    <location>
        <position position="120"/>
    </location>
</feature>
<feature type="glycosylation site" description="N-linked (GlcNAc...) asparagine" evidence="2">
    <location>
        <position position="121"/>
    </location>
</feature>
<feature type="disulfide bond" evidence="3">
    <location>
        <begin position="31"/>
        <end position="162"/>
    </location>
</feature>
<feature type="disulfide bond" evidence="3">
    <location>
        <begin position="49"/>
        <end position="65"/>
    </location>
</feature>
<feature type="disulfide bond" evidence="3">
    <location>
        <begin position="141"/>
        <end position="209"/>
    </location>
</feature>
<feature type="disulfide bond" evidence="3">
    <location>
        <begin position="173"/>
        <end position="188"/>
    </location>
</feature>
<feature type="disulfide bond" evidence="3">
    <location>
        <begin position="199"/>
        <end position="224"/>
    </location>
</feature>
<accession>Q71QH5</accession>
<name>VSP08_TRIST</name>
<evidence type="ECO:0000250" key="1"/>
<evidence type="ECO:0000255" key="2"/>
<evidence type="ECO:0000255" key="3">
    <source>
        <dbReference type="PROSITE-ProRule" id="PRU00274"/>
    </source>
</evidence>
<comment type="function">
    <text evidence="1">Snake venom serine protease that may act in the hemostasis system of the prey.</text>
</comment>
<comment type="subunit">
    <text evidence="1">Monomer.</text>
</comment>
<comment type="subcellular location">
    <subcellularLocation>
        <location evidence="1">Secreted</location>
    </subcellularLocation>
</comment>
<comment type="tissue specificity">
    <text>Expressed by the venom gland.</text>
</comment>
<comment type="similarity">
    <text evidence="3">Belongs to the peptidase S1 family. Snake venom subfamily.</text>
</comment>
<organism>
    <name type="scientific">Trimeresurus stejnegeri</name>
    <name type="common">Chinese green tree viper</name>
    <name type="synonym">Viridovipera stejnegeri</name>
    <dbReference type="NCBI Taxonomy" id="39682"/>
    <lineage>
        <taxon>Eukaryota</taxon>
        <taxon>Metazoa</taxon>
        <taxon>Chordata</taxon>
        <taxon>Craniata</taxon>
        <taxon>Vertebrata</taxon>
        <taxon>Euteleostomi</taxon>
        <taxon>Lepidosauria</taxon>
        <taxon>Squamata</taxon>
        <taxon>Bifurcata</taxon>
        <taxon>Unidentata</taxon>
        <taxon>Episquamata</taxon>
        <taxon>Toxicofera</taxon>
        <taxon>Serpentes</taxon>
        <taxon>Colubroidea</taxon>
        <taxon>Viperidae</taxon>
        <taxon>Crotalinae</taxon>
        <taxon>Trimeresurus</taxon>
    </lineage>
</organism>
<keyword id="KW-1015">Disulfide bond</keyword>
<keyword id="KW-0325">Glycoprotein</keyword>
<keyword id="KW-1199">Hemostasis impairing toxin</keyword>
<keyword id="KW-0378">Hydrolase</keyword>
<keyword id="KW-0645">Protease</keyword>
<keyword id="KW-0964">Secreted</keyword>
<keyword id="KW-0720">Serine protease</keyword>
<keyword id="KW-0732">Signal</keyword>
<keyword id="KW-0800">Toxin</keyword>
<keyword id="KW-0865">Zymogen</keyword>
<dbReference type="EC" id="3.4.21.-"/>
<dbReference type="EMBL" id="AF395782">
    <property type="protein sequence ID" value="AAQ02912.1"/>
    <property type="molecule type" value="mRNA"/>
</dbReference>
<dbReference type="SMR" id="Q71QH5"/>
<dbReference type="MEROPS" id="S01.497"/>
<dbReference type="GO" id="GO:0005576">
    <property type="term" value="C:extracellular region"/>
    <property type="evidence" value="ECO:0007669"/>
    <property type="project" value="UniProtKB-SubCell"/>
</dbReference>
<dbReference type="GO" id="GO:0030141">
    <property type="term" value="C:secretory granule"/>
    <property type="evidence" value="ECO:0007669"/>
    <property type="project" value="TreeGrafter"/>
</dbReference>
<dbReference type="GO" id="GO:0004252">
    <property type="term" value="F:serine-type endopeptidase activity"/>
    <property type="evidence" value="ECO:0007669"/>
    <property type="project" value="InterPro"/>
</dbReference>
<dbReference type="GO" id="GO:0090729">
    <property type="term" value="F:toxin activity"/>
    <property type="evidence" value="ECO:0007669"/>
    <property type="project" value="UniProtKB-KW"/>
</dbReference>
<dbReference type="GO" id="GO:0006508">
    <property type="term" value="P:proteolysis"/>
    <property type="evidence" value="ECO:0007669"/>
    <property type="project" value="UniProtKB-KW"/>
</dbReference>
<dbReference type="CDD" id="cd00190">
    <property type="entry name" value="Tryp_SPc"/>
    <property type="match status" value="1"/>
</dbReference>
<dbReference type="FunFam" id="2.40.10.10:FF:000010">
    <property type="entry name" value="Kallikrein related peptidase 11"/>
    <property type="match status" value="1"/>
</dbReference>
<dbReference type="Gene3D" id="2.40.10.10">
    <property type="entry name" value="Trypsin-like serine proteases"/>
    <property type="match status" value="2"/>
</dbReference>
<dbReference type="InterPro" id="IPR009003">
    <property type="entry name" value="Peptidase_S1_PA"/>
</dbReference>
<dbReference type="InterPro" id="IPR043504">
    <property type="entry name" value="Peptidase_S1_PA_chymotrypsin"/>
</dbReference>
<dbReference type="InterPro" id="IPR001314">
    <property type="entry name" value="Peptidase_S1A"/>
</dbReference>
<dbReference type="InterPro" id="IPR001254">
    <property type="entry name" value="Trypsin_dom"/>
</dbReference>
<dbReference type="InterPro" id="IPR018114">
    <property type="entry name" value="TRYPSIN_HIS"/>
</dbReference>
<dbReference type="InterPro" id="IPR033116">
    <property type="entry name" value="TRYPSIN_SER"/>
</dbReference>
<dbReference type="PANTHER" id="PTHR24271:SF47">
    <property type="entry name" value="KALLIKREIN-1"/>
    <property type="match status" value="1"/>
</dbReference>
<dbReference type="PANTHER" id="PTHR24271">
    <property type="entry name" value="KALLIKREIN-RELATED"/>
    <property type="match status" value="1"/>
</dbReference>
<dbReference type="Pfam" id="PF00089">
    <property type="entry name" value="Trypsin"/>
    <property type="match status" value="1"/>
</dbReference>
<dbReference type="PRINTS" id="PR00722">
    <property type="entry name" value="CHYMOTRYPSIN"/>
</dbReference>
<dbReference type="SMART" id="SM00020">
    <property type="entry name" value="Tryp_SPc"/>
    <property type="match status" value="1"/>
</dbReference>
<dbReference type="SUPFAM" id="SSF50494">
    <property type="entry name" value="Trypsin-like serine proteases"/>
    <property type="match status" value="1"/>
</dbReference>
<dbReference type="PROSITE" id="PS50240">
    <property type="entry name" value="TRYPSIN_DOM"/>
    <property type="match status" value="1"/>
</dbReference>
<dbReference type="PROSITE" id="PS00134">
    <property type="entry name" value="TRYPSIN_HIS"/>
    <property type="match status" value="1"/>
</dbReference>
<dbReference type="PROSITE" id="PS00135">
    <property type="entry name" value="TRYPSIN_SER"/>
    <property type="match status" value="1"/>
</dbReference>